<keyword id="KW-0997">Cell inner membrane</keyword>
<keyword id="KW-1003">Cell membrane</keyword>
<keyword id="KW-0963">Cytoplasm</keyword>
<keyword id="KW-0342">GTP-binding</keyword>
<keyword id="KW-0378">Hydrolase</keyword>
<keyword id="KW-0472">Membrane</keyword>
<keyword id="KW-0547">Nucleotide-binding</keyword>
<keyword id="KW-0675">Receptor</keyword>
<keyword id="KW-1185">Reference proteome</keyword>
<protein>
    <recommendedName>
        <fullName evidence="1">Signal recognition particle receptor FtsY</fullName>
        <shortName evidence="1">SRP receptor</shortName>
        <ecNumber evidence="1">3.6.5.4</ecNumber>
    </recommendedName>
</protein>
<reference key="1">
    <citation type="journal article" date="2001" name="Science">
        <title>The genome of the natural genetic engineer Agrobacterium tumefaciens C58.</title>
        <authorList>
            <person name="Wood D.W."/>
            <person name="Setubal J.C."/>
            <person name="Kaul R."/>
            <person name="Monks D.E."/>
            <person name="Kitajima J.P."/>
            <person name="Okura V.K."/>
            <person name="Zhou Y."/>
            <person name="Chen L."/>
            <person name="Wood G.E."/>
            <person name="Almeida N.F. Jr."/>
            <person name="Woo L."/>
            <person name="Chen Y."/>
            <person name="Paulsen I.T."/>
            <person name="Eisen J.A."/>
            <person name="Karp P.D."/>
            <person name="Bovee D. Sr."/>
            <person name="Chapman P."/>
            <person name="Clendenning J."/>
            <person name="Deatherage G."/>
            <person name="Gillet W."/>
            <person name="Grant C."/>
            <person name="Kutyavin T."/>
            <person name="Levy R."/>
            <person name="Li M.-J."/>
            <person name="McClelland E."/>
            <person name="Palmieri A."/>
            <person name="Raymond C."/>
            <person name="Rouse G."/>
            <person name="Saenphimmachak C."/>
            <person name="Wu Z."/>
            <person name="Romero P."/>
            <person name="Gordon D."/>
            <person name="Zhang S."/>
            <person name="Yoo H."/>
            <person name="Tao Y."/>
            <person name="Biddle P."/>
            <person name="Jung M."/>
            <person name="Krespan W."/>
            <person name="Perry M."/>
            <person name="Gordon-Kamm B."/>
            <person name="Liao L."/>
            <person name="Kim S."/>
            <person name="Hendrick C."/>
            <person name="Zhao Z.-Y."/>
            <person name="Dolan M."/>
            <person name="Chumley F."/>
            <person name="Tingey S.V."/>
            <person name="Tomb J.-F."/>
            <person name="Gordon M.P."/>
            <person name="Olson M.V."/>
            <person name="Nester E.W."/>
        </authorList>
    </citation>
    <scope>NUCLEOTIDE SEQUENCE [LARGE SCALE GENOMIC DNA]</scope>
    <source>
        <strain>C58 / ATCC 33970</strain>
    </source>
</reference>
<reference key="2">
    <citation type="journal article" date="2001" name="Science">
        <title>Genome sequence of the plant pathogen and biotechnology agent Agrobacterium tumefaciens C58.</title>
        <authorList>
            <person name="Goodner B."/>
            <person name="Hinkle G."/>
            <person name="Gattung S."/>
            <person name="Miller N."/>
            <person name="Blanchard M."/>
            <person name="Qurollo B."/>
            <person name="Goldman B.S."/>
            <person name="Cao Y."/>
            <person name="Askenazi M."/>
            <person name="Halling C."/>
            <person name="Mullin L."/>
            <person name="Houmiel K."/>
            <person name="Gordon J."/>
            <person name="Vaudin M."/>
            <person name="Iartchouk O."/>
            <person name="Epp A."/>
            <person name="Liu F."/>
            <person name="Wollam C."/>
            <person name="Allinger M."/>
            <person name="Doughty D."/>
            <person name="Scott C."/>
            <person name="Lappas C."/>
            <person name="Markelz B."/>
            <person name="Flanagan C."/>
            <person name="Crowell C."/>
            <person name="Gurson J."/>
            <person name="Lomo C."/>
            <person name="Sear C."/>
            <person name="Strub G."/>
            <person name="Cielo C."/>
            <person name="Slater S."/>
        </authorList>
    </citation>
    <scope>NUCLEOTIDE SEQUENCE [LARGE SCALE GENOMIC DNA]</scope>
    <source>
        <strain>C58 / ATCC 33970</strain>
    </source>
</reference>
<sequence>MALGFIKKVFSFGKDKAETEERPQEDAALERGNENASFEAALSDAEAHDAVDKDPVSELEMETAGGPAADEAVDVAPAEDDEEEDAPLLPGAELSGDMGLVPLSLLQAEAAAEEQGEPLPEPLDAGLDADAMDALLNEAEAASAVESPAIPPVLPKGFSSAREREEPVPVAPQVKLTWFQRLRAGLARTSSQLTTQISALFTKRKLDEDTLDELEDLLIQSDLGVETAMRITGALSSERYGKDVSGEDVARIMAGEITKVLKPVAKPLELDLSHKPHVILVVGVNGTGKTTTIGKLAAKLSGSGLKVMLAAGDTFRAAAIEQLKIWADRTGSEFIGTKLGADAAGLAYDAYEQARAQKSDVLIIDTAGRLQNKTELMAELEKIVRVLGKLDPDAPHTVLQTLDATTGQNAMNQVEIFRNVAGVSGLIMTKLDGTARGGILVAIAAKHKLPVYFIGVGEGVEDLEPFEAEDFAKAIAGV</sequence>
<comment type="function">
    <text evidence="1">Involved in targeting and insertion of nascent membrane proteins into the cytoplasmic membrane. Acts as a receptor for the complex formed by the signal recognition particle (SRP) and the ribosome-nascent chain (RNC). Interaction with SRP-RNC leads to the transfer of the RNC complex to the Sec translocase for insertion into the membrane, the hydrolysis of GTP by both Ffh and FtsY, and the dissociation of the SRP-FtsY complex into the individual components.</text>
</comment>
<comment type="catalytic activity">
    <reaction evidence="1">
        <text>GTP + H2O = GDP + phosphate + H(+)</text>
        <dbReference type="Rhea" id="RHEA:19669"/>
        <dbReference type="ChEBI" id="CHEBI:15377"/>
        <dbReference type="ChEBI" id="CHEBI:15378"/>
        <dbReference type="ChEBI" id="CHEBI:37565"/>
        <dbReference type="ChEBI" id="CHEBI:43474"/>
        <dbReference type="ChEBI" id="CHEBI:58189"/>
        <dbReference type="EC" id="3.6.5.4"/>
    </reaction>
</comment>
<comment type="subunit">
    <text evidence="1">Part of the signal recognition particle protein translocation system, which is composed of SRP and FtsY. SRP is a ribonucleoprotein composed of Ffh and a 4.5S RNA molecule.</text>
</comment>
<comment type="subcellular location">
    <subcellularLocation>
        <location>Cell inner membrane</location>
        <topology>Peripheral membrane protein</topology>
        <orientation>Cytoplasmic side</orientation>
    </subcellularLocation>
    <subcellularLocation>
        <location evidence="1">Cytoplasm</location>
    </subcellularLocation>
</comment>
<comment type="similarity">
    <text evidence="1">Belongs to the GTP-binding SRP family. FtsY subfamily.</text>
</comment>
<proteinExistence type="inferred from homology"/>
<feature type="chain" id="PRO_0000416697" description="Signal recognition particle receptor FtsY">
    <location>
        <begin position="1"/>
        <end position="478"/>
    </location>
</feature>
<feature type="region of interest" description="Disordered" evidence="2">
    <location>
        <begin position="14"/>
        <end position="94"/>
    </location>
</feature>
<feature type="compositionally biased region" description="Basic and acidic residues" evidence="2">
    <location>
        <begin position="14"/>
        <end position="33"/>
    </location>
</feature>
<feature type="compositionally biased region" description="Basic and acidic residues" evidence="2">
    <location>
        <begin position="45"/>
        <end position="56"/>
    </location>
</feature>
<feature type="compositionally biased region" description="Acidic residues" evidence="2">
    <location>
        <begin position="71"/>
        <end position="86"/>
    </location>
</feature>
<feature type="binding site" evidence="1">
    <location>
        <begin position="283"/>
        <end position="290"/>
    </location>
    <ligand>
        <name>GTP</name>
        <dbReference type="ChEBI" id="CHEBI:37565"/>
    </ligand>
</feature>
<feature type="binding site" evidence="1">
    <location>
        <begin position="365"/>
        <end position="369"/>
    </location>
    <ligand>
        <name>GTP</name>
        <dbReference type="ChEBI" id="CHEBI:37565"/>
    </ligand>
</feature>
<feature type="binding site" evidence="1">
    <location>
        <begin position="429"/>
        <end position="432"/>
    </location>
    <ligand>
        <name>GTP</name>
        <dbReference type="ChEBI" id="CHEBI:37565"/>
    </ligand>
</feature>
<dbReference type="EC" id="3.6.5.4" evidence="1"/>
<dbReference type="EMBL" id="AE007869">
    <property type="protein sequence ID" value="AAK88413.1"/>
    <property type="molecule type" value="Genomic_DNA"/>
</dbReference>
<dbReference type="PIR" id="AD2907">
    <property type="entry name" value="AD2907"/>
</dbReference>
<dbReference type="PIR" id="D97682">
    <property type="entry name" value="D97682"/>
</dbReference>
<dbReference type="RefSeq" id="NP_355628.1">
    <property type="nucleotide sequence ID" value="NC_003062.2"/>
</dbReference>
<dbReference type="RefSeq" id="WP_010972493.1">
    <property type="nucleotide sequence ID" value="NC_003062.2"/>
</dbReference>
<dbReference type="SMR" id="A9CHH2"/>
<dbReference type="STRING" id="176299.Atu2693"/>
<dbReference type="EnsemblBacteria" id="AAK88413">
    <property type="protein sequence ID" value="AAK88413"/>
    <property type="gene ID" value="Atu2693"/>
</dbReference>
<dbReference type="GeneID" id="1134731"/>
<dbReference type="KEGG" id="atu:Atu2693"/>
<dbReference type="PATRIC" id="fig|176299.10.peg.2703"/>
<dbReference type="eggNOG" id="COG0552">
    <property type="taxonomic scope" value="Bacteria"/>
</dbReference>
<dbReference type="HOGENOM" id="CLU_009301_9_2_5"/>
<dbReference type="OrthoDB" id="9804720at2"/>
<dbReference type="PhylomeDB" id="A9CHH2"/>
<dbReference type="BioCyc" id="AGRO:ATU2693-MONOMER"/>
<dbReference type="Proteomes" id="UP000000813">
    <property type="component" value="Chromosome circular"/>
</dbReference>
<dbReference type="GO" id="GO:0005737">
    <property type="term" value="C:cytoplasm"/>
    <property type="evidence" value="ECO:0007669"/>
    <property type="project" value="UniProtKB-SubCell"/>
</dbReference>
<dbReference type="GO" id="GO:0005886">
    <property type="term" value="C:plasma membrane"/>
    <property type="evidence" value="ECO:0007669"/>
    <property type="project" value="UniProtKB-SubCell"/>
</dbReference>
<dbReference type="GO" id="GO:0016887">
    <property type="term" value="F:ATP hydrolysis activity"/>
    <property type="evidence" value="ECO:0007669"/>
    <property type="project" value="InterPro"/>
</dbReference>
<dbReference type="GO" id="GO:0005525">
    <property type="term" value="F:GTP binding"/>
    <property type="evidence" value="ECO:0007669"/>
    <property type="project" value="UniProtKB-UniRule"/>
</dbReference>
<dbReference type="GO" id="GO:0003924">
    <property type="term" value="F:GTPase activity"/>
    <property type="evidence" value="ECO:0007669"/>
    <property type="project" value="UniProtKB-UniRule"/>
</dbReference>
<dbReference type="GO" id="GO:0005047">
    <property type="term" value="F:signal recognition particle binding"/>
    <property type="evidence" value="ECO:0007669"/>
    <property type="project" value="TreeGrafter"/>
</dbReference>
<dbReference type="GO" id="GO:0006614">
    <property type="term" value="P:SRP-dependent cotranslational protein targeting to membrane"/>
    <property type="evidence" value="ECO:0007669"/>
    <property type="project" value="InterPro"/>
</dbReference>
<dbReference type="CDD" id="cd17874">
    <property type="entry name" value="FtsY"/>
    <property type="match status" value="1"/>
</dbReference>
<dbReference type="FunFam" id="1.20.120.140:FF:000002">
    <property type="entry name" value="Signal recognition particle receptor FtsY"/>
    <property type="match status" value="1"/>
</dbReference>
<dbReference type="FunFam" id="3.40.50.300:FF:000053">
    <property type="entry name" value="Signal recognition particle receptor FtsY"/>
    <property type="match status" value="1"/>
</dbReference>
<dbReference type="Gene3D" id="3.40.50.300">
    <property type="entry name" value="P-loop containing nucleotide triphosphate hydrolases"/>
    <property type="match status" value="1"/>
</dbReference>
<dbReference type="Gene3D" id="1.20.120.140">
    <property type="entry name" value="Signal recognition particle SRP54, nucleotide-binding domain"/>
    <property type="match status" value="1"/>
</dbReference>
<dbReference type="HAMAP" id="MF_00920">
    <property type="entry name" value="FtsY"/>
    <property type="match status" value="1"/>
</dbReference>
<dbReference type="InterPro" id="IPR003593">
    <property type="entry name" value="AAA+_ATPase"/>
</dbReference>
<dbReference type="InterPro" id="IPR027417">
    <property type="entry name" value="P-loop_NTPase"/>
</dbReference>
<dbReference type="InterPro" id="IPR013822">
    <property type="entry name" value="Signal_recog_particl_SRP54_hlx"/>
</dbReference>
<dbReference type="InterPro" id="IPR004390">
    <property type="entry name" value="SR_rcpt_FtsY"/>
</dbReference>
<dbReference type="InterPro" id="IPR036225">
    <property type="entry name" value="SRP/SRP_N"/>
</dbReference>
<dbReference type="InterPro" id="IPR000897">
    <property type="entry name" value="SRP54_GTPase_dom"/>
</dbReference>
<dbReference type="InterPro" id="IPR042101">
    <property type="entry name" value="SRP54_N_sf"/>
</dbReference>
<dbReference type="NCBIfam" id="TIGR00064">
    <property type="entry name" value="ftsY"/>
    <property type="match status" value="1"/>
</dbReference>
<dbReference type="PANTHER" id="PTHR43134">
    <property type="entry name" value="SIGNAL RECOGNITION PARTICLE RECEPTOR SUBUNIT ALPHA"/>
    <property type="match status" value="1"/>
</dbReference>
<dbReference type="PANTHER" id="PTHR43134:SF1">
    <property type="entry name" value="SIGNAL RECOGNITION PARTICLE RECEPTOR SUBUNIT ALPHA"/>
    <property type="match status" value="1"/>
</dbReference>
<dbReference type="Pfam" id="PF00448">
    <property type="entry name" value="SRP54"/>
    <property type="match status" value="1"/>
</dbReference>
<dbReference type="Pfam" id="PF02881">
    <property type="entry name" value="SRP54_N"/>
    <property type="match status" value="1"/>
</dbReference>
<dbReference type="SMART" id="SM00382">
    <property type="entry name" value="AAA"/>
    <property type="match status" value="1"/>
</dbReference>
<dbReference type="SMART" id="SM00962">
    <property type="entry name" value="SRP54"/>
    <property type="match status" value="1"/>
</dbReference>
<dbReference type="SMART" id="SM00963">
    <property type="entry name" value="SRP54_N"/>
    <property type="match status" value="1"/>
</dbReference>
<dbReference type="SUPFAM" id="SSF47364">
    <property type="entry name" value="Domain of the SRP/SRP receptor G-proteins"/>
    <property type="match status" value="1"/>
</dbReference>
<dbReference type="SUPFAM" id="SSF52540">
    <property type="entry name" value="P-loop containing nucleoside triphosphate hydrolases"/>
    <property type="match status" value="1"/>
</dbReference>
<dbReference type="PROSITE" id="PS00300">
    <property type="entry name" value="SRP54"/>
    <property type="match status" value="1"/>
</dbReference>
<evidence type="ECO:0000255" key="1">
    <source>
        <dbReference type="HAMAP-Rule" id="MF_00920"/>
    </source>
</evidence>
<evidence type="ECO:0000256" key="2">
    <source>
        <dbReference type="SAM" id="MobiDB-lite"/>
    </source>
</evidence>
<gene>
    <name evidence="1" type="primary">ftsY</name>
    <name type="ordered locus">Atu2693</name>
</gene>
<accession>A9CHH2</accession>
<name>FTSY_AGRFC</name>
<organism>
    <name type="scientific">Agrobacterium fabrum (strain C58 / ATCC 33970)</name>
    <name type="common">Agrobacterium tumefaciens (strain C58)</name>
    <dbReference type="NCBI Taxonomy" id="176299"/>
    <lineage>
        <taxon>Bacteria</taxon>
        <taxon>Pseudomonadati</taxon>
        <taxon>Pseudomonadota</taxon>
        <taxon>Alphaproteobacteria</taxon>
        <taxon>Hyphomicrobiales</taxon>
        <taxon>Rhizobiaceae</taxon>
        <taxon>Rhizobium/Agrobacterium group</taxon>
        <taxon>Agrobacterium</taxon>
        <taxon>Agrobacterium tumefaciens complex</taxon>
    </lineage>
</organism>